<accession>P34761</accession>
<accession>D6W0Z0</accession>
<feature type="chain" id="PRO_0000082005" description="Protein WHI3">
    <location>
        <begin position="1"/>
        <end position="661"/>
    </location>
</feature>
<feature type="domain" description="RRM" evidence="1">
    <location>
        <begin position="538"/>
        <end position="625"/>
    </location>
</feature>
<feature type="region of interest" description="Disordered" evidence="2">
    <location>
        <begin position="14"/>
        <end position="58"/>
    </location>
</feature>
<feature type="region of interest" description="Disordered" evidence="2">
    <location>
        <begin position="237"/>
        <end position="280"/>
    </location>
</feature>
<feature type="region of interest" description="Disordered" evidence="2">
    <location>
        <begin position="383"/>
        <end position="410"/>
    </location>
</feature>
<feature type="region of interest" description="Disordered" evidence="2">
    <location>
        <begin position="469"/>
        <end position="508"/>
    </location>
</feature>
<feature type="region of interest" description="Disordered" evidence="2">
    <location>
        <begin position="613"/>
        <end position="661"/>
    </location>
</feature>
<feature type="compositionally biased region" description="Low complexity" evidence="2">
    <location>
        <begin position="14"/>
        <end position="31"/>
    </location>
</feature>
<feature type="compositionally biased region" description="Polar residues" evidence="2">
    <location>
        <begin position="32"/>
        <end position="44"/>
    </location>
</feature>
<feature type="compositionally biased region" description="Low complexity" evidence="2">
    <location>
        <begin position="237"/>
        <end position="272"/>
    </location>
</feature>
<feature type="compositionally biased region" description="Low complexity" evidence="2">
    <location>
        <begin position="383"/>
        <end position="409"/>
    </location>
</feature>
<feature type="compositionally biased region" description="Low complexity" evidence="2">
    <location>
        <begin position="496"/>
        <end position="508"/>
    </location>
</feature>
<feature type="compositionally biased region" description="Low complexity" evidence="2">
    <location>
        <begin position="628"/>
        <end position="647"/>
    </location>
</feature>
<feature type="compositionally biased region" description="Polar residues" evidence="2">
    <location>
        <begin position="648"/>
        <end position="661"/>
    </location>
</feature>
<feature type="modified residue" description="Phosphoserine" evidence="5">
    <location>
        <position position="231"/>
    </location>
</feature>
<proteinExistence type="evidence at protein level"/>
<organism>
    <name type="scientific">Saccharomyces cerevisiae (strain ATCC 204508 / S288c)</name>
    <name type="common">Baker's yeast</name>
    <dbReference type="NCBI Taxonomy" id="559292"/>
    <lineage>
        <taxon>Eukaryota</taxon>
        <taxon>Fungi</taxon>
        <taxon>Dikarya</taxon>
        <taxon>Ascomycota</taxon>
        <taxon>Saccharomycotina</taxon>
        <taxon>Saccharomycetes</taxon>
        <taxon>Saccharomycetales</taxon>
        <taxon>Saccharomycetaceae</taxon>
        <taxon>Saccharomyces</taxon>
    </lineage>
</organism>
<dbReference type="EMBL" id="U01095">
    <property type="protein sequence ID" value="AAA03320.1"/>
    <property type="molecule type" value="Genomic_DNA"/>
</dbReference>
<dbReference type="EMBL" id="X78898">
    <property type="protein sequence ID" value="CAA55511.1"/>
    <property type="molecule type" value="Genomic_DNA"/>
</dbReference>
<dbReference type="EMBL" id="Z71473">
    <property type="protein sequence ID" value="CAA96092.1"/>
    <property type="molecule type" value="Genomic_DNA"/>
</dbReference>
<dbReference type="EMBL" id="BK006947">
    <property type="protein sequence ID" value="DAA10356.1"/>
    <property type="molecule type" value="Genomic_DNA"/>
</dbReference>
<dbReference type="PIR" id="S50734">
    <property type="entry name" value="S50734"/>
</dbReference>
<dbReference type="RefSeq" id="NP_014202.1">
    <property type="nucleotide sequence ID" value="NM_001183035.1"/>
</dbReference>
<dbReference type="SMR" id="P34761"/>
<dbReference type="BioGRID" id="35636">
    <property type="interactions" value="557"/>
</dbReference>
<dbReference type="FunCoup" id="P34761">
    <property type="interactions" value="223"/>
</dbReference>
<dbReference type="IntAct" id="P34761">
    <property type="interactions" value="18"/>
</dbReference>
<dbReference type="MINT" id="P34761"/>
<dbReference type="STRING" id="4932.YNL197C"/>
<dbReference type="GlyGen" id="P34761">
    <property type="glycosylation" value="2 sites, 1 O-linked glycan (2 sites)"/>
</dbReference>
<dbReference type="iPTMnet" id="P34761"/>
<dbReference type="PaxDb" id="4932-YNL197C"/>
<dbReference type="PeptideAtlas" id="P34761"/>
<dbReference type="TopDownProteomics" id="P34761"/>
<dbReference type="EnsemblFungi" id="YNL197C_mRNA">
    <property type="protein sequence ID" value="YNL197C"/>
    <property type="gene ID" value="YNL197C"/>
</dbReference>
<dbReference type="GeneID" id="855524"/>
<dbReference type="KEGG" id="sce:YNL197C"/>
<dbReference type="AGR" id="SGD:S000005141"/>
<dbReference type="SGD" id="S000005141">
    <property type="gene designation" value="WHI3"/>
</dbReference>
<dbReference type="VEuPathDB" id="FungiDB:YNL197C"/>
<dbReference type="eggNOG" id="KOG0118">
    <property type="taxonomic scope" value="Eukaryota"/>
</dbReference>
<dbReference type="GeneTree" id="ENSGT00940000176750"/>
<dbReference type="HOGENOM" id="CLU_018359_0_0_1"/>
<dbReference type="InParanoid" id="P34761"/>
<dbReference type="OMA" id="PQPEHMY"/>
<dbReference type="OrthoDB" id="431169at2759"/>
<dbReference type="BioCyc" id="YEAST:G3O-33207-MONOMER"/>
<dbReference type="BioGRID-ORCS" id="855524">
    <property type="hits" value="8 hits in 10 CRISPR screens"/>
</dbReference>
<dbReference type="CD-CODE" id="E03F929F">
    <property type="entry name" value="Stress granule"/>
</dbReference>
<dbReference type="CD-CODE" id="F0168FE2">
    <property type="entry name" value="WHI3 cluster"/>
</dbReference>
<dbReference type="PRO" id="PR:P34761"/>
<dbReference type="Proteomes" id="UP000002311">
    <property type="component" value="Chromosome XIV"/>
</dbReference>
<dbReference type="RNAct" id="P34761">
    <property type="molecule type" value="protein"/>
</dbReference>
<dbReference type="GO" id="GO:0005737">
    <property type="term" value="C:cytoplasm"/>
    <property type="evidence" value="ECO:0000314"/>
    <property type="project" value="SGD"/>
</dbReference>
<dbReference type="GO" id="GO:0010494">
    <property type="term" value="C:cytoplasmic stress granule"/>
    <property type="evidence" value="ECO:0000314"/>
    <property type="project" value="SGD"/>
</dbReference>
<dbReference type="GO" id="GO:0005789">
    <property type="term" value="C:endoplasmic reticulum membrane"/>
    <property type="evidence" value="ECO:0000314"/>
    <property type="project" value="SGD"/>
</dbReference>
<dbReference type="GO" id="GO:0000932">
    <property type="term" value="C:P-body"/>
    <property type="evidence" value="ECO:0000314"/>
    <property type="project" value="SGD"/>
</dbReference>
<dbReference type="GO" id="GO:0003729">
    <property type="term" value="F:mRNA binding"/>
    <property type="evidence" value="ECO:0000314"/>
    <property type="project" value="SGD"/>
</dbReference>
<dbReference type="GO" id="GO:0071554">
    <property type="term" value="P:cell wall organization or biogenesis"/>
    <property type="evidence" value="ECO:0000315"/>
    <property type="project" value="CACAO"/>
</dbReference>
<dbReference type="GO" id="GO:0001403">
    <property type="term" value="P:invasive growth in response to glucose limitation"/>
    <property type="evidence" value="ECO:0000315"/>
    <property type="project" value="SGD"/>
</dbReference>
<dbReference type="GO" id="GO:0061157">
    <property type="term" value="P:mRNA destabilization"/>
    <property type="evidence" value="ECO:0000315"/>
    <property type="project" value="SGD"/>
</dbReference>
<dbReference type="GO" id="GO:0045793">
    <property type="term" value="P:positive regulation of cell size"/>
    <property type="evidence" value="ECO:0000315"/>
    <property type="project" value="CACAO"/>
</dbReference>
<dbReference type="GO" id="GO:0010811">
    <property type="term" value="P:positive regulation of cell-substrate adhesion"/>
    <property type="evidence" value="ECO:0000315"/>
    <property type="project" value="CACAO"/>
</dbReference>
<dbReference type="GO" id="GO:0045893">
    <property type="term" value="P:positive regulation of DNA-templated transcription"/>
    <property type="evidence" value="ECO:0000315"/>
    <property type="project" value="CACAO"/>
</dbReference>
<dbReference type="GO" id="GO:0045727">
    <property type="term" value="P:positive regulation of translation"/>
    <property type="evidence" value="ECO:0000315"/>
    <property type="project" value="CACAO"/>
</dbReference>
<dbReference type="GO" id="GO:0045901">
    <property type="term" value="P:positive regulation of translational elongation"/>
    <property type="evidence" value="ECO:0000315"/>
    <property type="project" value="CACAO"/>
</dbReference>
<dbReference type="GO" id="GO:0007124">
    <property type="term" value="P:pseudohyphal growth"/>
    <property type="evidence" value="ECO:0000315"/>
    <property type="project" value="SGD"/>
</dbReference>
<dbReference type="GO" id="GO:0008361">
    <property type="term" value="P:regulation of cell size"/>
    <property type="evidence" value="ECO:0007001"/>
    <property type="project" value="SGD"/>
</dbReference>
<dbReference type="GO" id="GO:0061013">
    <property type="term" value="P:regulation of mRNA catabolic process"/>
    <property type="evidence" value="ECO:0000315"/>
    <property type="project" value="SGD"/>
</dbReference>
<dbReference type="GO" id="GO:0007089">
    <property type="term" value="P:traversing start control point of mitotic cell cycle"/>
    <property type="evidence" value="ECO:0000315"/>
    <property type="project" value="SGD"/>
</dbReference>
<dbReference type="CDD" id="cd12245">
    <property type="entry name" value="RRM_scw1_like"/>
    <property type="match status" value="1"/>
</dbReference>
<dbReference type="FunFam" id="3.30.70.330:FF:000089">
    <property type="entry name" value="RNA binding protein"/>
    <property type="match status" value="1"/>
</dbReference>
<dbReference type="Gene3D" id="3.30.70.330">
    <property type="match status" value="1"/>
</dbReference>
<dbReference type="InterPro" id="IPR012677">
    <property type="entry name" value="Nucleotide-bd_a/b_plait_sf"/>
</dbReference>
<dbReference type="InterPro" id="IPR035979">
    <property type="entry name" value="RBD_domain_sf"/>
</dbReference>
<dbReference type="InterPro" id="IPR000504">
    <property type="entry name" value="RRM_dom"/>
</dbReference>
<dbReference type="PANTHER" id="PTHR10501">
    <property type="entry name" value="U1 SMALL NUCLEAR RIBONUCLEOPROTEIN A/U2 SMALL NUCLEAR RIBONUCLEOPROTEIN B"/>
    <property type="match status" value="1"/>
</dbReference>
<dbReference type="Pfam" id="PF00076">
    <property type="entry name" value="RRM_1"/>
    <property type="match status" value="1"/>
</dbReference>
<dbReference type="SMART" id="SM00360">
    <property type="entry name" value="RRM"/>
    <property type="match status" value="1"/>
</dbReference>
<dbReference type="SUPFAM" id="SSF54928">
    <property type="entry name" value="RNA-binding domain, RBD"/>
    <property type="match status" value="1"/>
</dbReference>
<dbReference type="PROSITE" id="PS50102">
    <property type="entry name" value="RRM"/>
    <property type="match status" value="1"/>
</dbReference>
<reference key="1">
    <citation type="journal article" date="2001" name="Genetics">
        <title>Isolation and characterization of WHI3, a size-control gene of Saccharomyces cerevisiae.</title>
        <authorList>
            <person name="Nash R.S."/>
            <person name="Volpe T."/>
            <person name="Futcher B."/>
        </authorList>
    </citation>
    <scope>NUCLEOTIDE SEQUENCE [GENOMIC DNA]</scope>
    <scope>FUNCTION</scope>
</reference>
<reference key="2">
    <citation type="journal article" date="1994" name="Yeast">
        <title>A 21.7 kb DNA segment on the left arm of yeast chromosome XIV carries WHI3, GCR2, SPX18, SPX19, an homologue to the heat shock gene SSB1 and 8 new open reading frames of unknown function.</title>
        <authorList>
            <person name="Jonniaux J.-L."/>
            <person name="Coster F."/>
            <person name="Purnelle B."/>
            <person name="Goffeau A."/>
        </authorList>
    </citation>
    <scope>NUCLEOTIDE SEQUENCE [GENOMIC DNA]</scope>
    <source>
        <strain>ATCC 96604 / S288c / FY1679</strain>
    </source>
</reference>
<reference key="3">
    <citation type="journal article" date="1997" name="Nature">
        <title>The nucleotide sequence of Saccharomyces cerevisiae chromosome XIV and its evolutionary implications.</title>
        <authorList>
            <person name="Philippsen P."/>
            <person name="Kleine K."/>
            <person name="Poehlmann R."/>
            <person name="Duesterhoeft A."/>
            <person name="Hamberg K."/>
            <person name="Hegemann J.H."/>
            <person name="Obermaier B."/>
            <person name="Urrestarazu L.A."/>
            <person name="Aert R."/>
            <person name="Albermann K."/>
            <person name="Altmann R."/>
            <person name="Andre B."/>
            <person name="Baladron V."/>
            <person name="Ballesta J.P.G."/>
            <person name="Becam A.-M."/>
            <person name="Beinhauer J.D."/>
            <person name="Boskovic J."/>
            <person name="Buitrago M.J."/>
            <person name="Bussereau F."/>
            <person name="Coster F."/>
            <person name="Crouzet M."/>
            <person name="D'Angelo M."/>
            <person name="Dal Pero F."/>
            <person name="De Antoni A."/>
            <person name="del Rey F."/>
            <person name="Doignon F."/>
            <person name="Domdey H."/>
            <person name="Dubois E."/>
            <person name="Fiedler T.A."/>
            <person name="Fleig U."/>
            <person name="Floeth M."/>
            <person name="Fritz C."/>
            <person name="Gaillardin C."/>
            <person name="Garcia-Cantalejo J.M."/>
            <person name="Glansdorff N."/>
            <person name="Goffeau A."/>
            <person name="Gueldener U."/>
            <person name="Herbert C.J."/>
            <person name="Heumann K."/>
            <person name="Heuss-Neitzel D."/>
            <person name="Hilbert H."/>
            <person name="Hinni K."/>
            <person name="Iraqui Houssaini I."/>
            <person name="Jacquet M."/>
            <person name="Jimenez A."/>
            <person name="Jonniaux J.-L."/>
            <person name="Karpfinger-Hartl L."/>
            <person name="Lanfranchi G."/>
            <person name="Lepingle A."/>
            <person name="Levesque H."/>
            <person name="Lyck R."/>
            <person name="Maftahi M."/>
            <person name="Mallet L."/>
            <person name="Maurer C.T.C."/>
            <person name="Messenguy F."/>
            <person name="Mewes H.-W."/>
            <person name="Moestl D."/>
            <person name="Nasr F."/>
            <person name="Nicaud J.-M."/>
            <person name="Niedenthal R.K."/>
            <person name="Pandolfo D."/>
            <person name="Pierard A."/>
            <person name="Piravandi E."/>
            <person name="Planta R.J."/>
            <person name="Pohl T.M."/>
            <person name="Purnelle B."/>
            <person name="Rebischung C."/>
            <person name="Remacha M.A."/>
            <person name="Revuelta J.L."/>
            <person name="Rinke M."/>
            <person name="Saiz J.E."/>
            <person name="Sartorello F."/>
            <person name="Scherens B."/>
            <person name="Sen-Gupta M."/>
            <person name="Soler-Mira A."/>
            <person name="Urbanus J.H.M."/>
            <person name="Valle G."/>
            <person name="Van Dyck L."/>
            <person name="Verhasselt P."/>
            <person name="Vierendeels F."/>
            <person name="Vissers S."/>
            <person name="Voet M."/>
            <person name="Volckaert G."/>
            <person name="Wach A."/>
            <person name="Wambutt R."/>
            <person name="Wedler H."/>
            <person name="Zollner A."/>
            <person name="Hani J."/>
        </authorList>
    </citation>
    <scope>NUCLEOTIDE SEQUENCE [LARGE SCALE GENOMIC DNA]</scope>
    <source>
        <strain>ATCC 204508 / S288c</strain>
    </source>
</reference>
<reference key="4">
    <citation type="journal article" date="2014" name="G3 (Bethesda)">
        <title>The reference genome sequence of Saccharomyces cerevisiae: Then and now.</title>
        <authorList>
            <person name="Engel S.R."/>
            <person name="Dietrich F.S."/>
            <person name="Fisk D.G."/>
            <person name="Binkley G."/>
            <person name="Balakrishnan R."/>
            <person name="Costanzo M.C."/>
            <person name="Dwight S.S."/>
            <person name="Hitz B.C."/>
            <person name="Karra K."/>
            <person name="Nash R.S."/>
            <person name="Weng S."/>
            <person name="Wong E.D."/>
            <person name="Lloyd P."/>
            <person name="Skrzypek M.S."/>
            <person name="Miyasato S.R."/>
            <person name="Simison M."/>
            <person name="Cherry J.M."/>
        </authorList>
    </citation>
    <scope>GENOME REANNOTATION</scope>
    <source>
        <strain>ATCC 204508 / S288c</strain>
    </source>
</reference>
<reference key="5">
    <citation type="journal article" date="2003" name="Nature">
        <title>Global analysis of protein expression in yeast.</title>
        <authorList>
            <person name="Ghaemmaghami S."/>
            <person name="Huh W.-K."/>
            <person name="Bower K."/>
            <person name="Howson R.W."/>
            <person name="Belle A."/>
            <person name="Dephoure N."/>
            <person name="O'Shea E.K."/>
            <person name="Weissman J.S."/>
        </authorList>
    </citation>
    <scope>LEVEL OF PROTEIN EXPRESSION [LARGE SCALE ANALYSIS]</scope>
</reference>
<reference key="6">
    <citation type="journal article" date="2007" name="Proc. Natl. Acad. Sci. U.S.A.">
        <title>Analysis of phosphorylation sites on proteins from Saccharomyces cerevisiae by electron transfer dissociation (ETD) mass spectrometry.</title>
        <authorList>
            <person name="Chi A."/>
            <person name="Huttenhower C."/>
            <person name="Geer L.Y."/>
            <person name="Coon J.J."/>
            <person name="Syka J.E.P."/>
            <person name="Bai D.L."/>
            <person name="Shabanowitz J."/>
            <person name="Burke D.J."/>
            <person name="Troyanskaya O.G."/>
            <person name="Hunt D.F."/>
        </authorList>
    </citation>
    <scope>IDENTIFICATION BY MASS SPECTROMETRY [LARGE SCALE ANALYSIS]</scope>
</reference>
<reference key="7">
    <citation type="journal article" date="2009" name="Science">
        <title>Global analysis of Cdk1 substrate phosphorylation sites provides insights into evolution.</title>
        <authorList>
            <person name="Holt L.J."/>
            <person name="Tuch B.B."/>
            <person name="Villen J."/>
            <person name="Johnson A.D."/>
            <person name="Gygi S.P."/>
            <person name="Morgan D.O."/>
        </authorList>
    </citation>
    <scope>PHOSPHORYLATION [LARGE SCALE ANALYSIS] AT SER-231</scope>
    <scope>IDENTIFICATION BY MASS SPECTROMETRY [LARGE SCALE ANALYSIS]</scope>
</reference>
<protein>
    <recommendedName>
        <fullName>Protein WHI3</fullName>
    </recommendedName>
</protein>
<keyword id="KW-0131">Cell cycle</keyword>
<keyword id="KW-0597">Phosphoprotein</keyword>
<keyword id="KW-1185">Reference proteome</keyword>
<keyword id="KW-0694">RNA-binding</keyword>
<evidence type="ECO:0000255" key="1">
    <source>
        <dbReference type="PROSITE-ProRule" id="PRU00176"/>
    </source>
</evidence>
<evidence type="ECO:0000256" key="2">
    <source>
        <dbReference type="SAM" id="MobiDB-lite"/>
    </source>
</evidence>
<evidence type="ECO:0000269" key="3">
    <source>
    </source>
</evidence>
<evidence type="ECO:0000269" key="4">
    <source>
    </source>
</evidence>
<evidence type="ECO:0007744" key="5">
    <source>
    </source>
</evidence>
<name>WHI3_YEAST</name>
<sequence>MQSSVYFDQTGSFASSSDNVVSSTTNTHNISPSHRSSLNLNTTSHPHEASGRGSASGELYLNDTNSPLAISSMLNTLALGSMPQDIASSNISNHDNNIKGSYSLKLSNVAKDITLRECYAIFALAEGVKSIELQKKNSSSSITSASLEDENDIFIIARFELLNLAINYAVILNSKNELFGPSFPNKTTVEIIDDTTKNLVSFPSSAIFNDTSRLNKSNSGMKRPSLLSQRSRFSFSDPFSNDSPLSQQQSQQQQQQPQQPQQHSTQKHSPQQCNQQQVNSSIPLSSQGQVIGLHSNHSHQDLSVESTIQTSDIGKSFLLRDNTEINEKIWGTSGIPSSINGYMSTPQPSTPTLEWGNTSASQHGSSFFLPSAASTAIAPTNSNTSANANASSNNGASNNGANQALSASSQQPMMQIGNTINTSLTSSNSLPPYGLMSSQSQHISNMVNTSDMNITPQKQNRFMQQPQPEHMYPVNQSNTPQKVPPARLSSSRNSHKNNSTTSLSSNITGSASISQADLSLLARIPPPANPADQNPPCNTLYVGNLPSDATEQELRQLFSGQEGFRRLSFRNKNTTSNGHSHGPMCFVEFDDVSFATRALAELYGRQLPRSTVSSKGGIRLSFSKNPLGVRGPNSRRGGSGNPNPNVNMLSSYNSNVGHIKN</sequence>
<comment type="function">
    <text evidence="3">Involved in size control and cell cycle.</text>
</comment>
<comment type="interaction">
    <interactant intactId="EBI-20537">
        <id>P34761</id>
    </interactant>
    <interactant intactId="EBI-8603">
        <id>P10592</id>
        <label>SSA2</label>
    </interactant>
    <organismsDiffer>false</organismsDiffer>
    <experiments>2</experiments>
</comment>
<comment type="interaction">
    <interactant intactId="EBI-20537">
        <id>P34761</id>
    </interactant>
    <interactant intactId="EBI-31312">
        <id>Q07655</id>
        <label>WHI4</label>
    </interactant>
    <organismsDiffer>false</organismsDiffer>
    <experiments>3</experiments>
</comment>
<comment type="miscellaneous">
    <text evidence="4">Present with 5730 molecules/cell in log phase SD medium.</text>
</comment>
<gene>
    <name type="primary">WHI3</name>
    <name type="ordered locus">YNL197C</name>
    <name type="ORF">N1382</name>
</gene>